<evidence type="ECO:0000250" key="1">
    <source>
        <dbReference type="UniProtKB" id="P49591"/>
    </source>
</evidence>
<evidence type="ECO:0000256" key="2">
    <source>
        <dbReference type="SAM" id="MobiDB-lite"/>
    </source>
</evidence>
<evidence type="ECO:0000305" key="3"/>
<evidence type="ECO:0007744" key="4">
    <source>
    </source>
</evidence>
<name>SYSC_MOUSE</name>
<protein>
    <recommendedName>
        <fullName>Serine--tRNA ligase, cytoplasmic</fullName>
        <ecNumber evidence="1">6.1.1.11</ecNumber>
    </recommendedName>
    <alternativeName>
        <fullName>Seryl-tRNA synthetase</fullName>
        <shortName>SerRS</shortName>
    </alternativeName>
    <alternativeName>
        <fullName>Seryl-tRNA(Ser/Sec) synthetase</fullName>
    </alternativeName>
</protein>
<reference key="1">
    <citation type="journal article" date="2005" name="Science">
        <title>The transcriptional landscape of the mammalian genome.</title>
        <authorList>
            <person name="Carninci P."/>
            <person name="Kasukawa T."/>
            <person name="Katayama S."/>
            <person name="Gough J."/>
            <person name="Frith M.C."/>
            <person name="Maeda N."/>
            <person name="Oyama R."/>
            <person name="Ravasi T."/>
            <person name="Lenhard B."/>
            <person name="Wells C."/>
            <person name="Kodzius R."/>
            <person name="Shimokawa K."/>
            <person name="Bajic V.B."/>
            <person name="Brenner S.E."/>
            <person name="Batalov S."/>
            <person name="Forrest A.R."/>
            <person name="Zavolan M."/>
            <person name="Davis M.J."/>
            <person name="Wilming L.G."/>
            <person name="Aidinis V."/>
            <person name="Allen J.E."/>
            <person name="Ambesi-Impiombato A."/>
            <person name="Apweiler R."/>
            <person name="Aturaliya R.N."/>
            <person name="Bailey T.L."/>
            <person name="Bansal M."/>
            <person name="Baxter L."/>
            <person name="Beisel K.W."/>
            <person name="Bersano T."/>
            <person name="Bono H."/>
            <person name="Chalk A.M."/>
            <person name="Chiu K.P."/>
            <person name="Choudhary V."/>
            <person name="Christoffels A."/>
            <person name="Clutterbuck D.R."/>
            <person name="Crowe M.L."/>
            <person name="Dalla E."/>
            <person name="Dalrymple B.P."/>
            <person name="de Bono B."/>
            <person name="Della Gatta G."/>
            <person name="di Bernardo D."/>
            <person name="Down T."/>
            <person name="Engstrom P."/>
            <person name="Fagiolini M."/>
            <person name="Faulkner G."/>
            <person name="Fletcher C.F."/>
            <person name="Fukushima T."/>
            <person name="Furuno M."/>
            <person name="Futaki S."/>
            <person name="Gariboldi M."/>
            <person name="Georgii-Hemming P."/>
            <person name="Gingeras T.R."/>
            <person name="Gojobori T."/>
            <person name="Green R.E."/>
            <person name="Gustincich S."/>
            <person name="Harbers M."/>
            <person name="Hayashi Y."/>
            <person name="Hensch T.K."/>
            <person name="Hirokawa N."/>
            <person name="Hill D."/>
            <person name="Huminiecki L."/>
            <person name="Iacono M."/>
            <person name="Ikeo K."/>
            <person name="Iwama A."/>
            <person name="Ishikawa T."/>
            <person name="Jakt M."/>
            <person name="Kanapin A."/>
            <person name="Katoh M."/>
            <person name="Kawasawa Y."/>
            <person name="Kelso J."/>
            <person name="Kitamura H."/>
            <person name="Kitano H."/>
            <person name="Kollias G."/>
            <person name="Krishnan S.P."/>
            <person name="Kruger A."/>
            <person name="Kummerfeld S.K."/>
            <person name="Kurochkin I.V."/>
            <person name="Lareau L.F."/>
            <person name="Lazarevic D."/>
            <person name="Lipovich L."/>
            <person name="Liu J."/>
            <person name="Liuni S."/>
            <person name="McWilliam S."/>
            <person name="Madan Babu M."/>
            <person name="Madera M."/>
            <person name="Marchionni L."/>
            <person name="Matsuda H."/>
            <person name="Matsuzawa S."/>
            <person name="Miki H."/>
            <person name="Mignone F."/>
            <person name="Miyake S."/>
            <person name="Morris K."/>
            <person name="Mottagui-Tabar S."/>
            <person name="Mulder N."/>
            <person name="Nakano N."/>
            <person name="Nakauchi H."/>
            <person name="Ng P."/>
            <person name="Nilsson R."/>
            <person name="Nishiguchi S."/>
            <person name="Nishikawa S."/>
            <person name="Nori F."/>
            <person name="Ohara O."/>
            <person name="Okazaki Y."/>
            <person name="Orlando V."/>
            <person name="Pang K.C."/>
            <person name="Pavan W.J."/>
            <person name="Pavesi G."/>
            <person name="Pesole G."/>
            <person name="Petrovsky N."/>
            <person name="Piazza S."/>
            <person name="Reed J."/>
            <person name="Reid J.F."/>
            <person name="Ring B.Z."/>
            <person name="Ringwald M."/>
            <person name="Rost B."/>
            <person name="Ruan Y."/>
            <person name="Salzberg S.L."/>
            <person name="Sandelin A."/>
            <person name="Schneider C."/>
            <person name="Schoenbach C."/>
            <person name="Sekiguchi K."/>
            <person name="Semple C.A."/>
            <person name="Seno S."/>
            <person name="Sessa L."/>
            <person name="Sheng Y."/>
            <person name="Shibata Y."/>
            <person name="Shimada H."/>
            <person name="Shimada K."/>
            <person name="Silva D."/>
            <person name="Sinclair B."/>
            <person name="Sperling S."/>
            <person name="Stupka E."/>
            <person name="Sugiura K."/>
            <person name="Sultana R."/>
            <person name="Takenaka Y."/>
            <person name="Taki K."/>
            <person name="Tammoja K."/>
            <person name="Tan S.L."/>
            <person name="Tang S."/>
            <person name="Taylor M.S."/>
            <person name="Tegner J."/>
            <person name="Teichmann S.A."/>
            <person name="Ueda H.R."/>
            <person name="van Nimwegen E."/>
            <person name="Verardo R."/>
            <person name="Wei C.L."/>
            <person name="Yagi K."/>
            <person name="Yamanishi H."/>
            <person name="Zabarovsky E."/>
            <person name="Zhu S."/>
            <person name="Zimmer A."/>
            <person name="Hide W."/>
            <person name="Bult C."/>
            <person name="Grimmond S.M."/>
            <person name="Teasdale R.D."/>
            <person name="Liu E.T."/>
            <person name="Brusic V."/>
            <person name="Quackenbush J."/>
            <person name="Wahlestedt C."/>
            <person name="Mattick J.S."/>
            <person name="Hume D.A."/>
            <person name="Kai C."/>
            <person name="Sasaki D."/>
            <person name="Tomaru Y."/>
            <person name="Fukuda S."/>
            <person name="Kanamori-Katayama M."/>
            <person name="Suzuki M."/>
            <person name="Aoki J."/>
            <person name="Arakawa T."/>
            <person name="Iida J."/>
            <person name="Imamura K."/>
            <person name="Itoh M."/>
            <person name="Kato T."/>
            <person name="Kawaji H."/>
            <person name="Kawagashira N."/>
            <person name="Kawashima T."/>
            <person name="Kojima M."/>
            <person name="Kondo S."/>
            <person name="Konno H."/>
            <person name="Nakano K."/>
            <person name="Ninomiya N."/>
            <person name="Nishio T."/>
            <person name="Okada M."/>
            <person name="Plessy C."/>
            <person name="Shibata K."/>
            <person name="Shiraki T."/>
            <person name="Suzuki S."/>
            <person name="Tagami M."/>
            <person name="Waki K."/>
            <person name="Watahiki A."/>
            <person name="Okamura-Oho Y."/>
            <person name="Suzuki H."/>
            <person name="Kawai J."/>
            <person name="Hayashizaki Y."/>
        </authorList>
    </citation>
    <scope>NUCLEOTIDE SEQUENCE [LARGE SCALE MRNA]</scope>
    <source>
        <strain>C57BL/6J</strain>
        <tissue>Stomach</tissue>
    </source>
</reference>
<reference key="2">
    <citation type="journal article" date="2009" name="PLoS Biol.">
        <title>Lineage-specific biology revealed by a finished genome assembly of the mouse.</title>
        <authorList>
            <person name="Church D.M."/>
            <person name="Goodstadt L."/>
            <person name="Hillier L.W."/>
            <person name="Zody M.C."/>
            <person name="Goldstein S."/>
            <person name="She X."/>
            <person name="Bult C.J."/>
            <person name="Agarwala R."/>
            <person name="Cherry J.L."/>
            <person name="DiCuccio M."/>
            <person name="Hlavina W."/>
            <person name="Kapustin Y."/>
            <person name="Meric P."/>
            <person name="Maglott D."/>
            <person name="Birtle Z."/>
            <person name="Marques A.C."/>
            <person name="Graves T."/>
            <person name="Zhou S."/>
            <person name="Teague B."/>
            <person name="Potamousis K."/>
            <person name="Churas C."/>
            <person name="Place M."/>
            <person name="Herschleb J."/>
            <person name="Runnheim R."/>
            <person name="Forrest D."/>
            <person name="Amos-Landgraf J."/>
            <person name="Schwartz D.C."/>
            <person name="Cheng Z."/>
            <person name="Lindblad-Toh K."/>
            <person name="Eichler E.E."/>
            <person name="Ponting C.P."/>
        </authorList>
    </citation>
    <scope>NUCLEOTIDE SEQUENCE [LARGE SCALE GENOMIC DNA]</scope>
    <source>
        <strain>C57BL/6J</strain>
    </source>
</reference>
<reference key="3">
    <citation type="journal article" date="2004" name="Genome Res.">
        <title>The status, quality, and expansion of the NIH full-length cDNA project: the Mammalian Gene Collection (MGC).</title>
        <authorList>
            <consortium name="The MGC Project Team"/>
        </authorList>
    </citation>
    <scope>NUCLEOTIDE SEQUENCE [LARGE SCALE MRNA]</scope>
    <source>
        <tissue>Mammary tumor</tissue>
    </source>
</reference>
<reference key="4">
    <citation type="journal article" date="1991" name="J. Biol. Chem.">
        <title>Mammalian seryl-tRNA synthetase associates with mRNA in vivo and has homology to elongation factor 1 alpha.</title>
        <authorList>
            <person name="Miseta A."/>
            <person name="Woodley C.L."/>
            <person name="Greenberg J.R."/>
            <person name="Slobin L.I."/>
        </authorList>
    </citation>
    <scope>NUCLEOTIDE SEQUENCE [MRNA] OF 1-283</scope>
</reference>
<reference key="5">
    <citation type="journal article" date="2010" name="Cell">
        <title>A tissue-specific atlas of mouse protein phosphorylation and expression.</title>
        <authorList>
            <person name="Huttlin E.L."/>
            <person name="Jedrychowski M.P."/>
            <person name="Elias J.E."/>
            <person name="Goswami T."/>
            <person name="Rad R."/>
            <person name="Beausoleil S.A."/>
            <person name="Villen J."/>
            <person name="Haas W."/>
            <person name="Sowa M.E."/>
            <person name="Gygi S.P."/>
        </authorList>
    </citation>
    <scope>PHOSPHORYLATION [LARGE SCALE ANALYSIS] AT SER-506</scope>
    <scope>IDENTIFICATION BY MASS SPECTROMETRY [LARGE SCALE ANALYSIS]</scope>
    <source>
        <tissue>Brain</tissue>
        <tissue>Brown adipose tissue</tissue>
        <tissue>Heart</tissue>
        <tissue>Kidney</tissue>
        <tissue>Liver</tissue>
        <tissue>Lung</tissue>
        <tissue>Pancreas</tissue>
        <tissue>Spleen</tissue>
        <tissue>Testis</tissue>
    </source>
</reference>
<feature type="chain" id="PRO_0000122192" description="Serine--tRNA ligase, cytoplasmic">
    <location>
        <begin position="1"/>
        <end position="512"/>
    </location>
</feature>
<feature type="region of interest" description="Interaction with tRNA" evidence="1">
    <location>
        <begin position="9"/>
        <end position="61"/>
    </location>
</feature>
<feature type="region of interest" description="Disordered" evidence="2">
    <location>
        <begin position="470"/>
        <end position="512"/>
    </location>
</feature>
<feature type="short sequence motif" description="Nuclear localization signal" evidence="1">
    <location>
        <begin position="482"/>
        <end position="494"/>
    </location>
</feature>
<feature type="compositionally biased region" description="Basic and acidic residues" evidence="2">
    <location>
        <begin position="479"/>
        <end position="499"/>
    </location>
</feature>
<feature type="compositionally biased region" description="Polar residues" evidence="2">
    <location>
        <begin position="502"/>
        <end position="512"/>
    </location>
</feature>
<feature type="binding site" evidence="1">
    <location>
        <position position="271"/>
    </location>
    <ligand>
        <name>L-serine</name>
        <dbReference type="ChEBI" id="CHEBI:33384"/>
    </ligand>
</feature>
<feature type="binding site" evidence="1">
    <location>
        <begin position="302"/>
        <end position="304"/>
    </location>
    <ligand>
        <name>ATP</name>
        <dbReference type="ChEBI" id="CHEBI:30616"/>
    </ligand>
</feature>
<feature type="binding site" evidence="1">
    <location>
        <position position="302"/>
    </location>
    <ligand>
        <name>L-serine</name>
        <dbReference type="ChEBI" id="CHEBI:33384"/>
    </ligand>
</feature>
<feature type="binding site" evidence="1">
    <location>
        <begin position="318"/>
        <end position="321"/>
    </location>
    <ligand>
        <name>ATP</name>
        <dbReference type="ChEBI" id="CHEBI:30616"/>
    </ligand>
</feature>
<feature type="binding site" evidence="1">
    <location>
        <position position="325"/>
    </location>
    <ligand>
        <name>L-serine</name>
        <dbReference type="ChEBI" id="CHEBI:33384"/>
    </ligand>
</feature>
<feature type="binding site" evidence="1">
    <location>
        <begin position="391"/>
        <end position="394"/>
    </location>
    <ligand>
        <name>ATP</name>
        <dbReference type="ChEBI" id="CHEBI:30616"/>
    </ligand>
</feature>
<feature type="binding site" evidence="1">
    <location>
        <position position="427"/>
    </location>
    <ligand>
        <name>L-serine</name>
        <dbReference type="ChEBI" id="CHEBI:33384"/>
    </ligand>
</feature>
<feature type="site" description="Important for serine binding" evidence="1">
    <location>
        <position position="429"/>
    </location>
</feature>
<feature type="modified residue" description="N-acetylmethionine" evidence="1">
    <location>
        <position position="1"/>
    </location>
</feature>
<feature type="modified residue" description="Phosphoserine" evidence="1">
    <location>
        <position position="241"/>
    </location>
</feature>
<feature type="modified residue" description="N6-acetyllysine" evidence="1">
    <location>
        <position position="323"/>
    </location>
</feature>
<feature type="modified residue" description="Phosphoserine" evidence="4">
    <location>
        <position position="506"/>
    </location>
</feature>
<feature type="sequence conflict" description="In Ref. 4; AAA40108." evidence="3" ref="4">
    <original>A</original>
    <variation>R</variation>
    <location>
        <position position="96"/>
    </location>
</feature>
<feature type="sequence conflict" description="In Ref. 4; AAA40108." evidence="3" ref="4">
    <original>RGYFLKGP</original>
    <variation>PGVLPEGA</variation>
    <location>
        <begin position="192"/>
        <end position="199"/>
    </location>
</feature>
<feature type="sequence conflict" description="In Ref. 4; AAA40108." evidence="3" ref="4">
    <original>E</original>
    <variation>A</variation>
    <location>
        <position position="283"/>
    </location>
</feature>
<comment type="function">
    <text evidence="1">Catalyzes the attachment of serine to tRNA(Ser) in a two-step reaction: serine is first activated by ATP to form Ser-AMP and then transferred to the acceptor end of tRNA(Ser). Is probably also able to aminoacylate tRNA(Sec) with serine, to form the misacylated tRNA L-seryl-tRNA(Sec), which will be further converted into selenocysteinyl-tRNA(Sec). In the nucleus, binds to the VEGFA core promoter and prevents MYC binding and transcriptional activation by MYC. Recruits SIRT2 to the VEGFA promoter, promoting deacetylation of histone H4 at 'Lys-16' (H4K16). Thereby, inhibits the production of VEGFA and sprouting angiogenesis mediated by VEGFA.</text>
</comment>
<comment type="catalytic activity">
    <reaction evidence="1">
        <text>tRNA(Ser) + L-serine + ATP = L-seryl-tRNA(Ser) + AMP + diphosphate + H(+)</text>
        <dbReference type="Rhea" id="RHEA:12292"/>
        <dbReference type="Rhea" id="RHEA-COMP:9669"/>
        <dbReference type="Rhea" id="RHEA-COMP:9703"/>
        <dbReference type="ChEBI" id="CHEBI:15378"/>
        <dbReference type="ChEBI" id="CHEBI:30616"/>
        <dbReference type="ChEBI" id="CHEBI:33019"/>
        <dbReference type="ChEBI" id="CHEBI:33384"/>
        <dbReference type="ChEBI" id="CHEBI:78442"/>
        <dbReference type="ChEBI" id="CHEBI:78533"/>
        <dbReference type="ChEBI" id="CHEBI:456215"/>
        <dbReference type="EC" id="6.1.1.11"/>
    </reaction>
</comment>
<comment type="catalytic activity">
    <reaction evidence="1">
        <text>tRNA(Sec) + L-serine + ATP = L-seryl-tRNA(Sec) + AMP + diphosphate + H(+)</text>
        <dbReference type="Rhea" id="RHEA:42580"/>
        <dbReference type="Rhea" id="RHEA-COMP:9742"/>
        <dbReference type="Rhea" id="RHEA-COMP:10128"/>
        <dbReference type="ChEBI" id="CHEBI:15378"/>
        <dbReference type="ChEBI" id="CHEBI:30616"/>
        <dbReference type="ChEBI" id="CHEBI:33019"/>
        <dbReference type="ChEBI" id="CHEBI:33384"/>
        <dbReference type="ChEBI" id="CHEBI:78442"/>
        <dbReference type="ChEBI" id="CHEBI:78533"/>
        <dbReference type="ChEBI" id="CHEBI:456215"/>
        <dbReference type="EC" id="6.1.1.11"/>
    </reaction>
</comment>
<comment type="pathway">
    <text>Aminoacyl-tRNA biosynthesis; selenocysteinyl-tRNA(Sec) biosynthesis; L-seryl-tRNA(Sec) from L-serine and tRNA(Sec): step 1/1.</text>
</comment>
<comment type="subunit">
    <text evidence="1">Homodimer. The tRNA molecule may bind across the dimer. Interacts with SIRT2. Interacts with METTL6; interaction is required for the tRNA N(3)-methylcytidine methyltransferase activity of METTL6.</text>
</comment>
<comment type="subcellular location">
    <subcellularLocation>
        <location evidence="1">Cytoplasm</location>
    </subcellularLocation>
    <subcellularLocation>
        <location evidence="1">Nucleus</location>
    </subcellularLocation>
    <text evidence="1">Predominantly cytoplasmic, but a minor proportion is also found in the nucleus.</text>
</comment>
<comment type="domain">
    <text evidence="1">Consists of two distinct domains, a catalytic core and a N-terminal extension that is involved in tRNA binding.</text>
</comment>
<comment type="similarity">
    <text evidence="3">Belongs to the class-II aminoacyl-tRNA synthetase family. Type-1 seryl-tRNA synthetase subfamily.</text>
</comment>
<proteinExistence type="evidence at protein level"/>
<sequence length="512" mass="58389">MVLDLDLFRVDKGGDPALIRETQEKRFKDPGLVDQLVKADSEWRRCRFRADNLNKLKNLCSKTIGEKMKKKEAVGDDESVPENVLNFDDLTADALAALKVSQIKKVRLLIDEAIQKCDGERVKLEAERFENLREIGNLLHPSVPISNDEDADNKVERIWGDCTVRKKYSHVDLVVMVDGFEGEKGAVVAGSRGYFLKGPLVFLEQALIQYALRTLGSRGYTPIYTPFFMRKEVMQEVAQLSQFDEELYKVIGKGSEKSDDNSYDEKYLIATSEQPIAALHRDEWLRPEDLPIKYAGLSTCFRQEVGSHGRDTRGIFRVHQFEKIEQFVYSSPHDNKSWEMFDEMIATAEEFYQSLGIPYHIVNIVSGSLNHAASKKLDLEAWFPGSGAFRELVSCSNCTDYQARRLRIRYGQTKKMMDKVEFVHMLNATMCATTRTICAILENYQAEKGIAVPEKLREFMPPGLQELIPFVKPAPIDQEPSKKQKKQHEGSKKKAKEVPLENQLQSMEVTEA</sequence>
<gene>
    <name type="primary">Sars1</name>
    <name type="synonym">Sars</name>
    <name type="synonym">Sers</name>
</gene>
<dbReference type="EC" id="6.1.1.11" evidence="1"/>
<dbReference type="EMBL" id="AK075827">
    <property type="protein sequence ID" value="BAC35990.1"/>
    <property type="molecule type" value="mRNA"/>
</dbReference>
<dbReference type="EMBL" id="AL672200">
    <property type="status" value="NOT_ANNOTATED_CDS"/>
    <property type="molecule type" value="Genomic_DNA"/>
</dbReference>
<dbReference type="EMBL" id="BC008612">
    <property type="protein sequence ID" value="AAH08612.1"/>
    <property type="molecule type" value="mRNA"/>
</dbReference>
<dbReference type="EMBL" id="M74012">
    <property type="protein sequence ID" value="AAA40108.1"/>
    <property type="molecule type" value="mRNA"/>
</dbReference>
<dbReference type="CCDS" id="CCDS57254.1"/>
<dbReference type="RefSeq" id="NP_001191908.1">
    <property type="nucleotide sequence ID" value="NM_001204979.1"/>
</dbReference>
<dbReference type="SMR" id="P26638"/>
<dbReference type="BioGRID" id="203074">
    <property type="interactions" value="31"/>
</dbReference>
<dbReference type="FunCoup" id="P26638">
    <property type="interactions" value="3180"/>
</dbReference>
<dbReference type="IntAct" id="P26638">
    <property type="interactions" value="10"/>
</dbReference>
<dbReference type="MINT" id="P26638"/>
<dbReference type="STRING" id="10090.ENSMUSP00000099685"/>
<dbReference type="GlyGen" id="P26638">
    <property type="glycosylation" value="2 sites, 1 N-linked glycan (1 site), 1 O-linked glycan (1 site)"/>
</dbReference>
<dbReference type="iPTMnet" id="P26638"/>
<dbReference type="PhosphoSitePlus" id="P26638"/>
<dbReference type="SwissPalm" id="P26638"/>
<dbReference type="REPRODUCTION-2DPAGE" id="P26638"/>
<dbReference type="jPOST" id="P26638"/>
<dbReference type="PaxDb" id="10090-ENSMUSP00000099685"/>
<dbReference type="PeptideAtlas" id="P26638"/>
<dbReference type="ProteomicsDB" id="254790"/>
<dbReference type="Pumba" id="P26638"/>
<dbReference type="Antibodypedia" id="1608">
    <property type="antibodies" value="244 antibodies from 30 providers"/>
</dbReference>
<dbReference type="DNASU" id="20226"/>
<dbReference type="Ensembl" id="ENSMUST00000090553.12">
    <property type="protein sequence ID" value="ENSMUSP00000088041.6"/>
    <property type="gene ID" value="ENSMUSG00000068739.14"/>
</dbReference>
<dbReference type="GeneID" id="20226"/>
<dbReference type="KEGG" id="mmu:20226"/>
<dbReference type="UCSC" id="uc008qzb.2">
    <property type="organism name" value="mouse"/>
</dbReference>
<dbReference type="AGR" id="MGI:102809"/>
<dbReference type="CTD" id="6301"/>
<dbReference type="MGI" id="MGI:102809">
    <property type="gene designation" value="Sars1"/>
</dbReference>
<dbReference type="VEuPathDB" id="HostDB:ENSMUSG00000068739"/>
<dbReference type="eggNOG" id="KOG2509">
    <property type="taxonomic scope" value="Eukaryota"/>
</dbReference>
<dbReference type="GeneTree" id="ENSGT00940000153792"/>
<dbReference type="InParanoid" id="P26638"/>
<dbReference type="OrthoDB" id="10264585at2759"/>
<dbReference type="UniPathway" id="UPA00906">
    <property type="reaction ID" value="UER00895"/>
</dbReference>
<dbReference type="BioGRID-ORCS" id="20226">
    <property type="hits" value="23 hits in 77 CRISPR screens"/>
</dbReference>
<dbReference type="ChiTaRS" id="Sars">
    <property type="organism name" value="mouse"/>
</dbReference>
<dbReference type="PRO" id="PR:P26638"/>
<dbReference type="Proteomes" id="UP000000589">
    <property type="component" value="Chromosome 3"/>
</dbReference>
<dbReference type="RNAct" id="P26638">
    <property type="molecule type" value="protein"/>
</dbReference>
<dbReference type="Bgee" id="ENSMUSG00000068739">
    <property type="expression patterns" value="Expressed in seminal vesicle and 272 other cell types or tissues"/>
</dbReference>
<dbReference type="ExpressionAtlas" id="P26638">
    <property type="expression patterns" value="baseline and differential"/>
</dbReference>
<dbReference type="GO" id="GO:0005829">
    <property type="term" value="C:cytosol"/>
    <property type="evidence" value="ECO:0000250"/>
    <property type="project" value="UniProtKB"/>
</dbReference>
<dbReference type="GO" id="GO:0005739">
    <property type="term" value="C:mitochondrion"/>
    <property type="evidence" value="ECO:0007005"/>
    <property type="project" value="MGI"/>
</dbReference>
<dbReference type="GO" id="GO:0005634">
    <property type="term" value="C:nucleus"/>
    <property type="evidence" value="ECO:0000250"/>
    <property type="project" value="UniProtKB"/>
</dbReference>
<dbReference type="GO" id="GO:0005524">
    <property type="term" value="F:ATP binding"/>
    <property type="evidence" value="ECO:0007669"/>
    <property type="project" value="UniProtKB-KW"/>
</dbReference>
<dbReference type="GO" id="GO:0019899">
    <property type="term" value="F:enzyme binding"/>
    <property type="evidence" value="ECO:0007669"/>
    <property type="project" value="Ensembl"/>
</dbReference>
<dbReference type="GO" id="GO:0060090">
    <property type="term" value="F:molecular adaptor activity"/>
    <property type="evidence" value="ECO:0007669"/>
    <property type="project" value="Ensembl"/>
</dbReference>
<dbReference type="GO" id="GO:0042803">
    <property type="term" value="F:protein homodimerization activity"/>
    <property type="evidence" value="ECO:0007669"/>
    <property type="project" value="Ensembl"/>
</dbReference>
<dbReference type="GO" id="GO:0000978">
    <property type="term" value="F:RNA polymerase II cis-regulatory region sequence-specific DNA binding"/>
    <property type="evidence" value="ECO:0000250"/>
    <property type="project" value="UniProtKB"/>
</dbReference>
<dbReference type="GO" id="GO:0098619">
    <property type="term" value="F:selenocysteine-tRNA ligase activity"/>
    <property type="evidence" value="ECO:0000250"/>
    <property type="project" value="UniProtKB"/>
</dbReference>
<dbReference type="GO" id="GO:0004828">
    <property type="term" value="F:serine-tRNA ligase activity"/>
    <property type="evidence" value="ECO:0000250"/>
    <property type="project" value="UniProtKB"/>
</dbReference>
<dbReference type="GO" id="GO:0002181">
    <property type="term" value="P:cytoplasmic translation"/>
    <property type="evidence" value="ECO:0000250"/>
    <property type="project" value="UniProtKB"/>
</dbReference>
<dbReference type="GO" id="GO:0016525">
    <property type="term" value="P:negative regulation of angiogenesis"/>
    <property type="evidence" value="ECO:0000250"/>
    <property type="project" value="UniProtKB"/>
</dbReference>
<dbReference type="GO" id="GO:0000122">
    <property type="term" value="P:negative regulation of transcription by RNA polymerase II"/>
    <property type="evidence" value="ECO:0000250"/>
    <property type="project" value="UniProtKB"/>
</dbReference>
<dbReference type="GO" id="GO:1904046">
    <property type="term" value="P:negative regulation of vascular endothelial growth factor production"/>
    <property type="evidence" value="ECO:0000250"/>
    <property type="project" value="UniProtKB"/>
</dbReference>
<dbReference type="GO" id="GO:0001514">
    <property type="term" value="P:selenocysteine incorporation"/>
    <property type="evidence" value="ECO:0000250"/>
    <property type="project" value="UniProtKB"/>
</dbReference>
<dbReference type="GO" id="GO:0006434">
    <property type="term" value="P:seryl-tRNA aminoacylation"/>
    <property type="evidence" value="ECO:0000250"/>
    <property type="project" value="UniProtKB"/>
</dbReference>
<dbReference type="GO" id="GO:0006400">
    <property type="term" value="P:tRNA modification"/>
    <property type="evidence" value="ECO:0007669"/>
    <property type="project" value="Ensembl"/>
</dbReference>
<dbReference type="CDD" id="cd00770">
    <property type="entry name" value="SerRS_core"/>
    <property type="match status" value="1"/>
</dbReference>
<dbReference type="FunFam" id="1.10.287.40:FF:000002">
    <property type="entry name" value="Serine--tRNA ligase, cytoplasmic"/>
    <property type="match status" value="1"/>
</dbReference>
<dbReference type="FunFam" id="3.30.930.10:FF:000027">
    <property type="entry name" value="Serine--tRNA ligase, cytoplasmic"/>
    <property type="match status" value="1"/>
</dbReference>
<dbReference type="Gene3D" id="3.30.930.10">
    <property type="entry name" value="Bira Bifunctional Protein, Domain 2"/>
    <property type="match status" value="1"/>
</dbReference>
<dbReference type="Gene3D" id="1.10.287.40">
    <property type="entry name" value="Serine-tRNA synthetase, tRNA binding domain"/>
    <property type="match status" value="1"/>
</dbReference>
<dbReference type="InterPro" id="IPR002314">
    <property type="entry name" value="aa-tRNA-synt_IIb"/>
</dbReference>
<dbReference type="InterPro" id="IPR006195">
    <property type="entry name" value="aa-tRNA-synth_II"/>
</dbReference>
<dbReference type="InterPro" id="IPR045864">
    <property type="entry name" value="aa-tRNA-synth_II/BPL/LPL"/>
</dbReference>
<dbReference type="InterPro" id="IPR002317">
    <property type="entry name" value="Ser-tRNA-ligase_type_1"/>
</dbReference>
<dbReference type="InterPro" id="IPR015866">
    <property type="entry name" value="Ser-tRNA-synth_1_N"/>
</dbReference>
<dbReference type="InterPro" id="IPR042103">
    <property type="entry name" value="SerRS_1_N_sf"/>
</dbReference>
<dbReference type="InterPro" id="IPR033729">
    <property type="entry name" value="SerRS_core"/>
</dbReference>
<dbReference type="InterPro" id="IPR010978">
    <property type="entry name" value="tRNA-bd_arm"/>
</dbReference>
<dbReference type="NCBIfam" id="TIGR00414">
    <property type="entry name" value="serS"/>
    <property type="match status" value="1"/>
</dbReference>
<dbReference type="PANTHER" id="PTHR11778">
    <property type="entry name" value="SERYL-TRNA SYNTHETASE"/>
    <property type="match status" value="1"/>
</dbReference>
<dbReference type="Pfam" id="PF02403">
    <property type="entry name" value="Seryl_tRNA_N"/>
    <property type="match status" value="1"/>
</dbReference>
<dbReference type="Pfam" id="PF00587">
    <property type="entry name" value="tRNA-synt_2b"/>
    <property type="match status" value="1"/>
</dbReference>
<dbReference type="PIRSF" id="PIRSF001529">
    <property type="entry name" value="Ser-tRNA-synth_IIa"/>
    <property type="match status" value="1"/>
</dbReference>
<dbReference type="PRINTS" id="PR00981">
    <property type="entry name" value="TRNASYNTHSER"/>
</dbReference>
<dbReference type="SUPFAM" id="SSF55681">
    <property type="entry name" value="Class II aaRS and biotin synthetases"/>
    <property type="match status" value="1"/>
</dbReference>
<dbReference type="SUPFAM" id="SSF46589">
    <property type="entry name" value="tRNA-binding arm"/>
    <property type="match status" value="1"/>
</dbReference>
<dbReference type="PROSITE" id="PS50862">
    <property type="entry name" value="AA_TRNA_LIGASE_II"/>
    <property type="match status" value="1"/>
</dbReference>
<accession>P26638</accession>
<accession>A2AFR8</accession>
<organism>
    <name type="scientific">Mus musculus</name>
    <name type="common">Mouse</name>
    <dbReference type="NCBI Taxonomy" id="10090"/>
    <lineage>
        <taxon>Eukaryota</taxon>
        <taxon>Metazoa</taxon>
        <taxon>Chordata</taxon>
        <taxon>Craniata</taxon>
        <taxon>Vertebrata</taxon>
        <taxon>Euteleostomi</taxon>
        <taxon>Mammalia</taxon>
        <taxon>Eutheria</taxon>
        <taxon>Euarchontoglires</taxon>
        <taxon>Glires</taxon>
        <taxon>Rodentia</taxon>
        <taxon>Myomorpha</taxon>
        <taxon>Muroidea</taxon>
        <taxon>Muridae</taxon>
        <taxon>Murinae</taxon>
        <taxon>Mus</taxon>
        <taxon>Mus</taxon>
    </lineage>
</organism>
<keyword id="KW-0007">Acetylation</keyword>
<keyword id="KW-0030">Aminoacyl-tRNA synthetase</keyword>
<keyword id="KW-0067">ATP-binding</keyword>
<keyword id="KW-0963">Cytoplasm</keyword>
<keyword id="KW-0238">DNA-binding</keyword>
<keyword id="KW-0436">Ligase</keyword>
<keyword id="KW-0547">Nucleotide-binding</keyword>
<keyword id="KW-0539">Nucleus</keyword>
<keyword id="KW-0597">Phosphoprotein</keyword>
<keyword id="KW-0648">Protein biosynthesis</keyword>
<keyword id="KW-1185">Reference proteome</keyword>